<protein>
    <recommendedName>
        <fullName evidence="6">Corrinoid activation enzyme RamQ</fullName>
    </recommendedName>
</protein>
<feature type="chain" id="PRO_0000457584" description="Corrinoid activation enzyme RamQ">
    <location>
        <begin position="1"/>
        <end position="593"/>
    </location>
</feature>
<feature type="domain" description="2Fe-2S ferredoxin-type" evidence="1">
    <location>
        <begin position="1"/>
        <end position="76"/>
    </location>
</feature>
<feature type="binding site" evidence="1">
    <location>
        <position position="35"/>
    </location>
    <ligand>
        <name>[2Fe-2S] cluster</name>
        <dbReference type="ChEBI" id="CHEBI:190135"/>
    </ligand>
</feature>
<feature type="binding site" evidence="1">
    <location>
        <position position="41"/>
    </location>
    <ligand>
        <name>[2Fe-2S] cluster</name>
        <dbReference type="ChEBI" id="CHEBI:190135"/>
    </ligand>
</feature>
<feature type="binding site" evidence="1">
    <location>
        <position position="44"/>
    </location>
    <ligand>
        <name>[2Fe-2S] cluster</name>
        <dbReference type="ChEBI" id="CHEBI:190135"/>
    </ligand>
</feature>
<feature type="binding site" evidence="1">
    <location>
        <position position="60"/>
    </location>
    <ligand>
        <name>[2Fe-2S] cluster</name>
        <dbReference type="ChEBI" id="CHEBI:190135"/>
    </ligand>
</feature>
<reference key="1">
    <citation type="journal article" date="2017" name="Sci. Rep.">
        <title>Determination of the Genome and Primary Transcriptome of Syngas Fermenting Eubacterium limosum ATCC 8486.</title>
        <authorList>
            <person name="Song Y."/>
            <person name="Shin J."/>
            <person name="Jeong Y."/>
            <person name="Jin S."/>
            <person name="Lee J.K."/>
            <person name="Kim D.R."/>
            <person name="Kim S.C."/>
            <person name="Cho S."/>
            <person name="Cho B.K."/>
        </authorList>
    </citation>
    <scope>NUCLEOTIDE SEQUENCE [LARGE SCALE GENOMIC DNA]</scope>
    <source>
        <strain>ATCC 8486</strain>
    </source>
</reference>
<reference key="2">
    <citation type="journal article" date="2019" name="J. Biol. Chem.">
        <title>MtpB, a member of the MttB superfamily from the human intestinal acetogen Eubacterium limosum, catalyzes proline betaine demethylation.</title>
        <authorList>
            <person name="Picking J.W."/>
            <person name="Behrman E.J."/>
            <person name="Zhang L."/>
            <person name="Krzycki J.A."/>
        </authorList>
    </citation>
    <scope>FUNCTION AS AN ACTIVATING ENZYME</scope>
    <scope>INDUCTION</scope>
    <source>
        <strain>ATCC 8486</strain>
    </source>
</reference>
<reference key="3">
    <citation type="journal article" date="2020" name="J. Biol. Chem.">
        <title>MtcB, a member of the MttB superfamily from the human gut acetogen Eubacterium limosum, is a cobalamin-dependent carnitine demethylase.</title>
        <authorList>
            <person name="Kountz D.J."/>
            <person name="Behrman E.J."/>
            <person name="Zhang L."/>
            <person name="Krzycki J.A."/>
        </authorList>
    </citation>
    <scope>FUNCTION AS AN ACTIVATING ENZYME</scope>
    <scope>INDUCTION</scope>
    <source>
        <strain>ATCC 8486</strain>
    </source>
</reference>
<accession>P0DX10</accession>
<gene>
    <name evidence="4 5" type="primary">ramQ</name>
    <name evidence="7" type="ORF">B2M23_04835</name>
</gene>
<sequence length="593" mass="64376">MRVLFPLLEEEIDVSQESLVSDVCASIGLPLNLVCGGKGRCKKCLVNVKENGEMKEVLACQYSVSDGMEIYASREQAASQILETSSNSDLPFDPIVKCYSLNYTDLVTPMCTYDLDVLRKLIPQTIDTPDYSVLKHFSEVYFLEGYERLHVIVSGNRIIDFIPSNEKEKPIYGIAFDIGTTSVVGYLYDITSGCLLNQHSMLNKQIAFGGDVISRIDYAGEGPESLHKIYEAIMETLAEIITQVCKKASIDTKDIYQTVYCGNSTMAHLFLELNPKHLGLAPFLGFCKDAISLKGMDTPLPINPKGTVTFMPLLGGFVGADTTAVLLGLPRDKKMRLMIDLGTNGEIAVGNCDKYYVASTACGPALEGAGLTMGMRGTTGAIEKVGCENGKITYSVIGKTAPQGFCGSGIVDAIAMLFREGLIAKRGNFIKGDALDAHPMKNRFGVDENNQRYFKIVTAGENPEGKDIIITQKDVRAVQLAKAAIYTGCCLLSENYGIKGSDLEEIVIAGAFGNYIDVHNAQFIGLLPKIEGVPVRSIGNGAGTGAQLYLLSKEEAGICNAIPRITTHIELATDPKFVETYMMNTMFGDNVMI</sequence>
<dbReference type="EMBL" id="CP019962">
    <property type="protein sequence ID" value="ARD64906.1"/>
    <property type="molecule type" value="Genomic_DNA"/>
</dbReference>
<dbReference type="RefSeq" id="WP_038351871.1">
    <property type="nucleotide sequence ID" value="NZ_CP019962.1"/>
</dbReference>
<dbReference type="SMR" id="P0DX10"/>
<dbReference type="KEGG" id="elim:B2M23_04835"/>
<dbReference type="OrthoDB" id="9810588at2"/>
<dbReference type="Proteomes" id="UP000192391">
    <property type="component" value="Chromosome"/>
</dbReference>
<dbReference type="GO" id="GO:0051537">
    <property type="term" value="F:2 iron, 2 sulfur cluster binding"/>
    <property type="evidence" value="ECO:0007669"/>
    <property type="project" value="UniProtKB-KW"/>
</dbReference>
<dbReference type="GO" id="GO:0046872">
    <property type="term" value="F:metal ion binding"/>
    <property type="evidence" value="ECO:0007669"/>
    <property type="project" value="UniProtKB-KW"/>
</dbReference>
<dbReference type="Gene3D" id="3.10.20.740">
    <property type="match status" value="1"/>
</dbReference>
<dbReference type="Gene3D" id="3.30.420.480">
    <property type="entry name" value="Domain of unknown function (DUF4445)"/>
    <property type="match status" value="1"/>
</dbReference>
<dbReference type="InterPro" id="IPR036010">
    <property type="entry name" value="2Fe-2S_ferredoxin-like_sf"/>
</dbReference>
<dbReference type="InterPro" id="IPR001041">
    <property type="entry name" value="2Fe-2S_ferredoxin-type"/>
</dbReference>
<dbReference type="InterPro" id="IPR052911">
    <property type="entry name" value="Corrinoid_activation_enz"/>
</dbReference>
<dbReference type="InterPro" id="IPR041414">
    <property type="entry name" value="Raco-like_middle"/>
</dbReference>
<dbReference type="InterPro" id="IPR042259">
    <property type="entry name" value="Raco-like_middle_sf"/>
</dbReference>
<dbReference type="InterPro" id="IPR027980">
    <property type="entry name" value="RACo_C"/>
</dbReference>
<dbReference type="PANTHER" id="PTHR42895:SF2">
    <property type="entry name" value="IRON-SULFUR CLUSTER PROTEIN"/>
    <property type="match status" value="1"/>
</dbReference>
<dbReference type="PANTHER" id="PTHR42895">
    <property type="entry name" value="IRON-SULFUR CLUSTER-BINDING PROTEIN-RELATED"/>
    <property type="match status" value="1"/>
</dbReference>
<dbReference type="Pfam" id="PF14574">
    <property type="entry name" value="RACo_C_ter"/>
    <property type="match status" value="1"/>
</dbReference>
<dbReference type="Pfam" id="PF17651">
    <property type="entry name" value="Raco_middle"/>
    <property type="match status" value="1"/>
</dbReference>
<dbReference type="SUPFAM" id="SSF54292">
    <property type="entry name" value="2Fe-2S ferredoxin-like"/>
    <property type="match status" value="1"/>
</dbReference>
<dbReference type="PROSITE" id="PS51085">
    <property type="entry name" value="2FE2S_FER_2"/>
    <property type="match status" value="1"/>
</dbReference>
<name>RAMQ_EUBLI</name>
<organism>
    <name type="scientific">Eubacterium limosum</name>
    <dbReference type="NCBI Taxonomy" id="1736"/>
    <lineage>
        <taxon>Bacteria</taxon>
        <taxon>Bacillati</taxon>
        <taxon>Bacillota</taxon>
        <taxon>Clostridia</taxon>
        <taxon>Eubacteriales</taxon>
        <taxon>Eubacteriaceae</taxon>
        <taxon>Eubacterium</taxon>
    </lineage>
</organism>
<proteinExistence type="evidence at protein level"/>
<keyword id="KW-0001">2Fe-2S</keyword>
<keyword id="KW-0408">Iron</keyword>
<keyword id="KW-0411">Iron-sulfur</keyword>
<keyword id="KW-0479">Metal-binding</keyword>
<evidence type="ECO:0000255" key="1">
    <source>
        <dbReference type="PROSITE-ProRule" id="PRU00465"/>
    </source>
</evidence>
<evidence type="ECO:0000269" key="2">
    <source>
    </source>
</evidence>
<evidence type="ECO:0000269" key="3">
    <source>
    </source>
</evidence>
<evidence type="ECO:0000303" key="4">
    <source>
    </source>
</evidence>
<evidence type="ECO:0000303" key="5">
    <source>
    </source>
</evidence>
<evidence type="ECO:0000305" key="6"/>
<evidence type="ECO:0000312" key="7">
    <source>
        <dbReference type="EMBL" id="ARD64906.1"/>
    </source>
</evidence>
<comment type="function">
    <text evidence="2 3">Involved in the degradation of the quaternary amines L-proline betaine and L-carnitine (PubMed:31341018, PubMed:32571881). Component of a corrinoid-dependent methyltransferase system that transfers a methyl group from L-proline betaine or L-carnitine to tetrahydrofolate (THF), forming methyl-THF, a key intermediate in the Wood-Ljungdahl acetogenesis pathway (PubMed:31341018, PubMed:32571881). RamQ is not required for the methyl transfer, but it stimulates reduction of reconstituted MtqC from the Co(II) state to the Co(I) state in vitro (PubMed:31341018). It also stimulates the rate of THF methylation (PubMed:32571881).</text>
</comment>
<comment type="cofactor">
    <cofactor evidence="1">
        <name>[2Fe-2S] cluster</name>
        <dbReference type="ChEBI" id="CHEBI:190135"/>
    </cofactor>
    <text evidence="1">Binds 1 2Fe-2S cluster.</text>
</comment>
<comment type="induction">
    <text evidence="2 3">Up-regulated during growth on proline betaine or L-carnitine.</text>
</comment>